<name>ACEK_ECOL6</name>
<evidence type="ECO:0000255" key="1">
    <source>
        <dbReference type="HAMAP-Rule" id="MF_00747"/>
    </source>
</evidence>
<dbReference type="EC" id="2.7.11.5" evidence="1"/>
<dbReference type="EC" id="3.1.3.-" evidence="1"/>
<dbReference type="EMBL" id="AE014075">
    <property type="protein sequence ID" value="AAN83400.1"/>
    <property type="molecule type" value="Genomic_DNA"/>
</dbReference>
<dbReference type="RefSeq" id="WP_001137237.1">
    <property type="nucleotide sequence ID" value="NZ_CP051263.1"/>
</dbReference>
<dbReference type="SMR" id="Q8FB61"/>
<dbReference type="STRING" id="199310.c4974"/>
<dbReference type="KEGG" id="ecc:c4974"/>
<dbReference type="eggNOG" id="COG4579">
    <property type="taxonomic scope" value="Bacteria"/>
</dbReference>
<dbReference type="HOGENOM" id="CLU_033804_1_1_6"/>
<dbReference type="BioCyc" id="ECOL199310:C4974-MONOMER"/>
<dbReference type="Proteomes" id="UP000001410">
    <property type="component" value="Chromosome"/>
</dbReference>
<dbReference type="GO" id="GO:0005737">
    <property type="term" value="C:cytoplasm"/>
    <property type="evidence" value="ECO:0007669"/>
    <property type="project" value="UniProtKB-SubCell"/>
</dbReference>
<dbReference type="GO" id="GO:0008772">
    <property type="term" value="F:[isocitrate dehydrogenase (NADP+)] kinase activity"/>
    <property type="evidence" value="ECO:0007669"/>
    <property type="project" value="UniProtKB-UniRule"/>
</dbReference>
<dbReference type="GO" id="GO:0016208">
    <property type="term" value="F:AMP binding"/>
    <property type="evidence" value="ECO:0007669"/>
    <property type="project" value="TreeGrafter"/>
</dbReference>
<dbReference type="GO" id="GO:0005524">
    <property type="term" value="F:ATP binding"/>
    <property type="evidence" value="ECO:0007669"/>
    <property type="project" value="UniProtKB-UniRule"/>
</dbReference>
<dbReference type="GO" id="GO:0004721">
    <property type="term" value="F:phosphoprotein phosphatase activity"/>
    <property type="evidence" value="ECO:0007669"/>
    <property type="project" value="UniProtKB-KW"/>
</dbReference>
<dbReference type="GO" id="GO:0004674">
    <property type="term" value="F:protein serine/threonine kinase activity"/>
    <property type="evidence" value="ECO:0007669"/>
    <property type="project" value="UniProtKB-KW"/>
</dbReference>
<dbReference type="GO" id="GO:0006006">
    <property type="term" value="P:glucose metabolic process"/>
    <property type="evidence" value="ECO:0007669"/>
    <property type="project" value="InterPro"/>
</dbReference>
<dbReference type="GO" id="GO:0006097">
    <property type="term" value="P:glyoxylate cycle"/>
    <property type="evidence" value="ECO:0007669"/>
    <property type="project" value="UniProtKB-UniRule"/>
</dbReference>
<dbReference type="GO" id="GO:0006099">
    <property type="term" value="P:tricarboxylic acid cycle"/>
    <property type="evidence" value="ECO:0007669"/>
    <property type="project" value="UniProtKB-UniRule"/>
</dbReference>
<dbReference type="HAMAP" id="MF_00747">
    <property type="entry name" value="AceK"/>
    <property type="match status" value="1"/>
</dbReference>
<dbReference type="InterPro" id="IPR046855">
    <property type="entry name" value="AceK_kinase"/>
</dbReference>
<dbReference type="InterPro" id="IPR046854">
    <property type="entry name" value="AceK_regulatory"/>
</dbReference>
<dbReference type="InterPro" id="IPR010452">
    <property type="entry name" value="Isocitrate_DH_AceK"/>
</dbReference>
<dbReference type="NCBIfam" id="NF002804">
    <property type="entry name" value="PRK02946.1"/>
    <property type="match status" value="1"/>
</dbReference>
<dbReference type="PANTHER" id="PTHR39559">
    <property type="match status" value="1"/>
</dbReference>
<dbReference type="PANTHER" id="PTHR39559:SF1">
    <property type="entry name" value="ISOCITRATE DEHYDROGENASE KINASE_PHOSPHATASE"/>
    <property type="match status" value="1"/>
</dbReference>
<dbReference type="Pfam" id="PF06315">
    <property type="entry name" value="AceK_kinase"/>
    <property type="match status" value="1"/>
</dbReference>
<dbReference type="Pfam" id="PF20423">
    <property type="entry name" value="AceK_regulatory"/>
    <property type="match status" value="1"/>
</dbReference>
<dbReference type="PIRSF" id="PIRSF000719">
    <property type="entry name" value="AceK"/>
    <property type="match status" value="1"/>
</dbReference>
<reference key="1">
    <citation type="journal article" date="2002" name="Proc. Natl. Acad. Sci. U.S.A.">
        <title>Extensive mosaic structure revealed by the complete genome sequence of uropathogenic Escherichia coli.</title>
        <authorList>
            <person name="Welch R.A."/>
            <person name="Burland V."/>
            <person name="Plunkett G. III"/>
            <person name="Redford P."/>
            <person name="Roesch P."/>
            <person name="Rasko D."/>
            <person name="Buckles E.L."/>
            <person name="Liou S.-R."/>
            <person name="Boutin A."/>
            <person name="Hackett J."/>
            <person name="Stroud D."/>
            <person name="Mayhew G.F."/>
            <person name="Rose D.J."/>
            <person name="Zhou S."/>
            <person name="Schwartz D.C."/>
            <person name="Perna N.T."/>
            <person name="Mobley H.L.T."/>
            <person name="Donnenberg M.S."/>
            <person name="Blattner F.R."/>
        </authorList>
    </citation>
    <scope>NUCLEOTIDE SEQUENCE [LARGE SCALE GENOMIC DNA]</scope>
    <source>
        <strain>CFT073 / ATCC 700928 / UPEC</strain>
    </source>
</reference>
<sequence length="574" mass="67206">MPRGLELLIAQTILQGFDAQYGRFLEVTSGAQQRFEQADWHAVQQAMKNRIHLYDHHVGLVVEQLRCITNGQSTDAAFLLRVKEHYTRLLPDYPRFEIAESFFNSVYCRLFDHRSLTPERLFIFSSQPERRFRTIPRPLAKDFHPDHGWESLLMRVISDLPLRLRWQNKSRDIHYIVRHLTETLGTDNLAESHLQVANELFYRNKAAWLVGKLITPSGTLPFLLPIHQTDDGELFIDTCLTTTAEASIVFGFARSYFMVYAPLPAALVEWLREILPGKTTAELYMAIGCQKHAKTESYREYLVYLQGCNEQFIEAPGIRGMVMLVFTLPGFDRVFKVIKDRFAPQKEMSAAHVRACYQLVKEHDRVGRMADTQEFENFVLEKRHISPALMELLLQEAAEKITDLGEQIVIRHLYIERRMVPLNIWLEQVEGQQLRDAIEEYGNAIRQLAAANIFPGDMLFKNFGVTRHGRVVFYDYDEICYMTEVNFRDIPLPRYPEDELASEPWYSVSPGDVFPEEFRHWLCADPRIGPLFEEMHADLFRADYWRALQNRIREGHVEDVYAYRRRQRFSVRFV</sequence>
<comment type="function">
    <text evidence="1">Bifunctional enzyme which can phosphorylate or dephosphorylate isocitrate dehydrogenase (IDH) on a specific serine residue. This is a regulatory mechanism which enables bacteria to bypass the Krebs cycle via the glyoxylate shunt in response to the source of carbon. When bacteria are grown on glucose, IDH is fully active and unphosphorylated, but when grown on acetate or ethanol, the activity of IDH declines drastically concomitant with its phosphorylation.</text>
</comment>
<comment type="catalytic activity">
    <reaction evidence="1">
        <text>L-seryl-[isocitrate dehydrogenase] + ATP = O-phospho-L-seryl-[isocitrate dehydrogenase] + ADP + H(+)</text>
        <dbReference type="Rhea" id="RHEA:43540"/>
        <dbReference type="Rhea" id="RHEA-COMP:10605"/>
        <dbReference type="Rhea" id="RHEA-COMP:10606"/>
        <dbReference type="ChEBI" id="CHEBI:15378"/>
        <dbReference type="ChEBI" id="CHEBI:29999"/>
        <dbReference type="ChEBI" id="CHEBI:30616"/>
        <dbReference type="ChEBI" id="CHEBI:83421"/>
        <dbReference type="ChEBI" id="CHEBI:456216"/>
        <dbReference type="EC" id="2.7.11.5"/>
    </reaction>
</comment>
<comment type="subcellular location">
    <subcellularLocation>
        <location evidence="1">Cytoplasm</location>
    </subcellularLocation>
</comment>
<comment type="similarity">
    <text evidence="1">Belongs to the AceK family.</text>
</comment>
<organism>
    <name type="scientific">Escherichia coli O6:H1 (strain CFT073 / ATCC 700928 / UPEC)</name>
    <dbReference type="NCBI Taxonomy" id="199310"/>
    <lineage>
        <taxon>Bacteria</taxon>
        <taxon>Pseudomonadati</taxon>
        <taxon>Pseudomonadota</taxon>
        <taxon>Gammaproteobacteria</taxon>
        <taxon>Enterobacterales</taxon>
        <taxon>Enterobacteriaceae</taxon>
        <taxon>Escherichia</taxon>
    </lineage>
</organism>
<accession>Q8FB61</accession>
<feature type="chain" id="PRO_0000057899" description="Isocitrate dehydrogenase kinase/phosphatase">
    <location>
        <begin position="1"/>
        <end position="574"/>
    </location>
</feature>
<feature type="active site" evidence="1">
    <location>
        <position position="371"/>
    </location>
</feature>
<feature type="binding site" evidence="1">
    <location>
        <begin position="315"/>
        <end position="321"/>
    </location>
    <ligand>
        <name>ATP</name>
        <dbReference type="ChEBI" id="CHEBI:30616"/>
    </ligand>
</feature>
<feature type="binding site" evidence="1">
    <location>
        <position position="336"/>
    </location>
    <ligand>
        <name>ATP</name>
        <dbReference type="ChEBI" id="CHEBI:30616"/>
    </ligand>
</feature>
<gene>
    <name evidence="1" type="primary">aceK</name>
    <name type="ordered locus">c4974</name>
</gene>
<protein>
    <recommendedName>
        <fullName evidence="1">Isocitrate dehydrogenase kinase/phosphatase</fullName>
        <shortName evidence="1">IDH kinase/phosphatase</shortName>
        <shortName evidence="1">IDHK/P</shortName>
        <ecNumber evidence="1">2.7.11.5</ecNumber>
        <ecNumber evidence="1">3.1.3.-</ecNumber>
    </recommendedName>
</protein>
<keyword id="KW-0067">ATP-binding</keyword>
<keyword id="KW-0963">Cytoplasm</keyword>
<keyword id="KW-0329">Glyoxylate bypass</keyword>
<keyword id="KW-0378">Hydrolase</keyword>
<keyword id="KW-0418">Kinase</keyword>
<keyword id="KW-0547">Nucleotide-binding</keyword>
<keyword id="KW-0904">Protein phosphatase</keyword>
<keyword id="KW-1185">Reference proteome</keyword>
<keyword id="KW-0723">Serine/threonine-protein kinase</keyword>
<keyword id="KW-0808">Transferase</keyword>
<keyword id="KW-0816">Tricarboxylic acid cycle</keyword>
<proteinExistence type="inferred from homology"/>